<comment type="catalytic activity">
    <reaction evidence="1">
        <text>2 L-glutamate + NADP(+) = L-glutamine + 2-oxoglutarate + NADPH + H(+)</text>
        <dbReference type="Rhea" id="RHEA:15501"/>
        <dbReference type="ChEBI" id="CHEBI:15378"/>
        <dbReference type="ChEBI" id="CHEBI:16810"/>
        <dbReference type="ChEBI" id="CHEBI:29985"/>
        <dbReference type="ChEBI" id="CHEBI:57783"/>
        <dbReference type="ChEBI" id="CHEBI:58349"/>
        <dbReference type="ChEBI" id="CHEBI:58359"/>
        <dbReference type="EC" id="1.4.1.13"/>
    </reaction>
</comment>
<comment type="cofactor">
    <cofactor evidence="1">
        <name>FMN</name>
        <dbReference type="ChEBI" id="CHEBI:58210"/>
    </cofactor>
</comment>
<comment type="similarity">
    <text evidence="2">Belongs to the glutamate synthase family.</text>
</comment>
<keyword id="KW-0004">4Fe-4S</keyword>
<keyword id="KW-0028">Amino-acid biosynthesis</keyword>
<keyword id="KW-0285">Flavoprotein</keyword>
<keyword id="KW-0288">FMN</keyword>
<keyword id="KW-0314">Glutamate biosynthesis</keyword>
<keyword id="KW-0408">Iron</keyword>
<keyword id="KW-0411">Iron-sulfur</keyword>
<keyword id="KW-0479">Metal-binding</keyword>
<keyword id="KW-0521">NADP</keyword>
<keyword id="KW-0560">Oxidoreductase</keyword>
<keyword id="KW-1185">Reference proteome</keyword>
<keyword id="KW-0677">Repeat</keyword>
<sequence>MMLEGEFHTHMLPEFMIERRQDRCIRCRVCERQCGFNVHWYDEEMDMMREDEMKCVGCQRCAVMCPTNALVVKPHPGNYKPNANWTRERLQDLKKQAETGGVLLTGSGNDKPYRIYWDHIVLNASQVTNPSIDPLREPMELRTFLGRKQDRLEFKYSEDFEDIEITTELYPNVQIETPIVFSAMSYGAISYQAFKSLAMAASEFGTLFNTGEGGLPKELRKYGKNAIVQCASGRFGVDPEYLNVAAVVEIKIGQGAKPGIGGHLPGEKVTLPISVTRMIPEGTDALSPAPQHDIYSIEDLSMLIYALKEATNYEKPVSVKIAAVHNVAAIASGMVRAGADIIAIDGLRGGTGAAPKMIRDNVGIPVELALAAVDQRLRDEGIRNKASILVAGGFRCSADVVKAIALGADAVYIGTPALVAMGCTLCQKCHTGICNWGICTQDPYLAKRLNPEITAKRLVNLLRAWSHEIKEMLGGMGINAIESLRGNREQLRGVGLEDWELEVLGIKGAGE</sequence>
<evidence type="ECO:0000250" key="1">
    <source>
        <dbReference type="UniProtKB" id="Q58746"/>
    </source>
</evidence>
<evidence type="ECO:0000255" key="2"/>
<evidence type="ECO:0000255" key="3">
    <source>
        <dbReference type="PROSITE-ProRule" id="PRU00711"/>
    </source>
</evidence>
<evidence type="ECO:0000303" key="4">
    <source>
    </source>
</evidence>
<evidence type="ECO:0000305" key="5"/>
<evidence type="ECO:0000312" key="6">
    <source>
        <dbReference type="EMBL" id="AAB90287.1"/>
    </source>
</evidence>
<name>AGLUS_ARCFU</name>
<feature type="chain" id="PRO_0000420606" description="Archaeal glutamate synthase [NADPH]">
    <location>
        <begin position="1"/>
        <end position="511"/>
    </location>
</feature>
<feature type="domain" description="4Fe-4S ferredoxin-type 1" evidence="3">
    <location>
        <begin position="15"/>
        <end position="44"/>
    </location>
</feature>
<feature type="domain" description="4Fe-4S ferredoxin-type 2" evidence="3">
    <location>
        <begin position="46"/>
        <end position="75"/>
    </location>
</feature>
<feature type="binding site" evidence="1">
    <location>
        <position position="24"/>
    </location>
    <ligand>
        <name>[4Fe-4S] cluster</name>
        <dbReference type="ChEBI" id="CHEBI:49883"/>
        <label>1</label>
    </ligand>
</feature>
<feature type="binding site" evidence="1">
    <location>
        <position position="27"/>
    </location>
    <ligand>
        <name>[4Fe-4S] cluster</name>
        <dbReference type="ChEBI" id="CHEBI:49883"/>
        <label>1</label>
    </ligand>
</feature>
<feature type="binding site" evidence="1">
    <location>
        <position position="30"/>
    </location>
    <ligand>
        <name>[4Fe-4S] cluster</name>
        <dbReference type="ChEBI" id="CHEBI:49883"/>
        <label>1</label>
    </ligand>
</feature>
<feature type="binding site" evidence="1">
    <location>
        <position position="34"/>
    </location>
    <ligand>
        <name>[4Fe-4S] cluster</name>
        <dbReference type="ChEBI" id="CHEBI:49883"/>
        <label>2</label>
    </ligand>
</feature>
<feature type="binding site" evidence="1">
    <location>
        <position position="55"/>
    </location>
    <ligand>
        <name>[4Fe-4S] cluster</name>
        <dbReference type="ChEBI" id="CHEBI:49883"/>
        <label>2</label>
    </ligand>
</feature>
<feature type="binding site" evidence="1">
    <location>
        <position position="58"/>
    </location>
    <ligand>
        <name>[4Fe-4S] cluster</name>
        <dbReference type="ChEBI" id="CHEBI:49883"/>
        <label>2</label>
    </ligand>
</feature>
<feature type="binding site" evidence="1">
    <location>
        <position position="61"/>
    </location>
    <ligand>
        <name>[4Fe-4S] cluster</name>
        <dbReference type="ChEBI" id="CHEBI:49883"/>
        <label>2</label>
    </ligand>
</feature>
<feature type="binding site" evidence="1">
    <location>
        <position position="65"/>
    </location>
    <ligand>
        <name>[4Fe-4S] cluster</name>
        <dbReference type="ChEBI" id="CHEBI:49883"/>
        <label>1</label>
    </ligand>
</feature>
<accession>O29309</accession>
<dbReference type="EC" id="1.4.1.13" evidence="1"/>
<dbReference type="EMBL" id="AE000782">
    <property type="protein sequence ID" value="AAB90287.1"/>
    <property type="molecule type" value="Genomic_DNA"/>
</dbReference>
<dbReference type="PIR" id="A69369">
    <property type="entry name" value="A69369"/>
</dbReference>
<dbReference type="RefSeq" id="WP_010878453.1">
    <property type="nucleotide sequence ID" value="NC_000917.1"/>
</dbReference>
<dbReference type="SMR" id="O29309"/>
<dbReference type="STRING" id="224325.AF_0953"/>
<dbReference type="PaxDb" id="224325-AF_0953"/>
<dbReference type="EnsemblBacteria" id="AAB90287">
    <property type="protein sequence ID" value="AAB90287"/>
    <property type="gene ID" value="AF_0953"/>
</dbReference>
<dbReference type="GeneID" id="1484176"/>
<dbReference type="KEGG" id="afu:AF_0953"/>
<dbReference type="eggNOG" id="arCOG00619">
    <property type="taxonomic scope" value="Archaea"/>
</dbReference>
<dbReference type="HOGENOM" id="CLU_023342_1_1_2"/>
<dbReference type="OrthoDB" id="2837at2157"/>
<dbReference type="PhylomeDB" id="O29309"/>
<dbReference type="BRENDA" id="1.4.1.13">
    <property type="organism ID" value="414"/>
</dbReference>
<dbReference type="Proteomes" id="UP000002199">
    <property type="component" value="Chromosome"/>
</dbReference>
<dbReference type="GO" id="GO:0051539">
    <property type="term" value="F:4 iron, 4 sulfur cluster binding"/>
    <property type="evidence" value="ECO:0007669"/>
    <property type="project" value="UniProtKB-KW"/>
</dbReference>
<dbReference type="GO" id="GO:0004355">
    <property type="term" value="F:glutamate synthase (NADPH) activity"/>
    <property type="evidence" value="ECO:0007669"/>
    <property type="project" value="UniProtKB-EC"/>
</dbReference>
<dbReference type="GO" id="GO:0046872">
    <property type="term" value="F:metal ion binding"/>
    <property type="evidence" value="ECO:0007669"/>
    <property type="project" value="UniProtKB-KW"/>
</dbReference>
<dbReference type="GO" id="GO:0006537">
    <property type="term" value="P:glutamate biosynthetic process"/>
    <property type="evidence" value="ECO:0007669"/>
    <property type="project" value="UniProtKB-KW"/>
</dbReference>
<dbReference type="CDD" id="cd02808">
    <property type="entry name" value="GltS_FMN"/>
    <property type="match status" value="1"/>
</dbReference>
<dbReference type="Gene3D" id="3.30.70.20">
    <property type="match status" value="1"/>
</dbReference>
<dbReference type="Gene3D" id="3.20.20.70">
    <property type="entry name" value="Aldolase class I"/>
    <property type="match status" value="1"/>
</dbReference>
<dbReference type="InterPro" id="IPR017896">
    <property type="entry name" value="4Fe4S_Fe-S-bd"/>
</dbReference>
<dbReference type="InterPro" id="IPR017900">
    <property type="entry name" value="4Fe4S_Fe_S_CS"/>
</dbReference>
<dbReference type="InterPro" id="IPR013785">
    <property type="entry name" value="Aldolase_TIM"/>
</dbReference>
<dbReference type="InterPro" id="IPR024188">
    <property type="entry name" value="GltB"/>
</dbReference>
<dbReference type="InterPro" id="IPR043578">
    <property type="entry name" value="GltB_archl_type"/>
</dbReference>
<dbReference type="InterPro" id="IPR002932">
    <property type="entry name" value="Glu_synthdom"/>
</dbReference>
<dbReference type="PANTHER" id="PTHR43819">
    <property type="entry name" value="ARCHAEAL-TYPE GLUTAMATE SYNTHASE [NADPH]"/>
    <property type="match status" value="1"/>
</dbReference>
<dbReference type="PANTHER" id="PTHR43819:SF1">
    <property type="entry name" value="ARCHAEAL-TYPE GLUTAMATE SYNTHASE [NADPH]"/>
    <property type="match status" value="1"/>
</dbReference>
<dbReference type="Pfam" id="PF12838">
    <property type="entry name" value="Fer4_7"/>
    <property type="match status" value="1"/>
</dbReference>
<dbReference type="Pfam" id="PF01645">
    <property type="entry name" value="Glu_synthase"/>
    <property type="match status" value="1"/>
</dbReference>
<dbReference type="PIRSF" id="PIRSF500061">
    <property type="entry name" value="GOGAT_lg2_archl"/>
    <property type="match status" value="1"/>
</dbReference>
<dbReference type="PIRSF" id="PIRSF006429">
    <property type="entry name" value="GOGAT_lg_2"/>
    <property type="match status" value="1"/>
</dbReference>
<dbReference type="SUPFAM" id="SSF54862">
    <property type="entry name" value="4Fe-4S ferredoxins"/>
    <property type="match status" value="1"/>
</dbReference>
<dbReference type="SUPFAM" id="SSF51395">
    <property type="entry name" value="FMN-linked oxidoreductases"/>
    <property type="match status" value="1"/>
</dbReference>
<dbReference type="PROSITE" id="PS00198">
    <property type="entry name" value="4FE4S_FER_1"/>
    <property type="match status" value="2"/>
</dbReference>
<dbReference type="PROSITE" id="PS51379">
    <property type="entry name" value="4FE4S_FER_2"/>
    <property type="match status" value="2"/>
</dbReference>
<protein>
    <recommendedName>
        <fullName>Archaeal glutamate synthase [NADPH]</fullName>
        <ecNumber evidence="1">1.4.1.13</ecNumber>
    </recommendedName>
    <alternativeName>
        <fullName>Archaeal NADPH-GOGAT</fullName>
    </alternativeName>
</protein>
<gene>
    <name evidence="4" type="primary">gltB</name>
    <name type="ordered locus">AF_0953</name>
</gene>
<organism>
    <name type="scientific">Archaeoglobus fulgidus (strain ATCC 49558 / DSM 4304 / JCM 9628 / NBRC 100126 / VC-16)</name>
    <dbReference type="NCBI Taxonomy" id="224325"/>
    <lineage>
        <taxon>Archaea</taxon>
        <taxon>Methanobacteriati</taxon>
        <taxon>Methanobacteriota</taxon>
        <taxon>Archaeoglobi</taxon>
        <taxon>Archaeoglobales</taxon>
        <taxon>Archaeoglobaceae</taxon>
        <taxon>Archaeoglobus</taxon>
    </lineage>
</organism>
<proteinExistence type="inferred from homology"/>
<reference evidence="6" key="1">
    <citation type="journal article" date="1997" name="Nature">
        <title>The complete genome sequence of the hyperthermophilic, sulphate-reducing archaeon Archaeoglobus fulgidus.</title>
        <authorList>
            <person name="Klenk H.-P."/>
            <person name="Clayton R.A."/>
            <person name="Tomb J.-F."/>
            <person name="White O."/>
            <person name="Nelson K.E."/>
            <person name="Ketchum K.A."/>
            <person name="Dodson R.J."/>
            <person name="Gwinn M.L."/>
            <person name="Hickey E.K."/>
            <person name="Peterson J.D."/>
            <person name="Richardson D.L."/>
            <person name="Kerlavage A.R."/>
            <person name="Graham D.E."/>
            <person name="Kyrpides N.C."/>
            <person name="Fleischmann R.D."/>
            <person name="Quackenbush J."/>
            <person name="Lee N.H."/>
            <person name="Sutton G.G."/>
            <person name="Gill S.R."/>
            <person name="Kirkness E.F."/>
            <person name="Dougherty B.A."/>
            <person name="McKenney K."/>
            <person name="Adams M.D."/>
            <person name="Loftus B.J."/>
            <person name="Peterson S.N."/>
            <person name="Reich C.I."/>
            <person name="McNeil L.K."/>
            <person name="Badger J.H."/>
            <person name="Glodek A."/>
            <person name="Zhou L."/>
            <person name="Overbeek R."/>
            <person name="Gocayne J.D."/>
            <person name="Weidman J.F."/>
            <person name="McDonald L.A."/>
            <person name="Utterback T.R."/>
            <person name="Cotton M.D."/>
            <person name="Spriggs T."/>
            <person name="Artiach P."/>
            <person name="Kaine B.P."/>
            <person name="Sykes S.M."/>
            <person name="Sadow P.W."/>
            <person name="D'Andrea K.P."/>
            <person name="Bowman C."/>
            <person name="Fujii C."/>
            <person name="Garland S.A."/>
            <person name="Mason T.M."/>
            <person name="Olsen G.J."/>
            <person name="Fraser C.M."/>
            <person name="Smith H.O."/>
            <person name="Woese C.R."/>
            <person name="Venter J.C."/>
        </authorList>
    </citation>
    <scope>NUCLEOTIDE SEQUENCE [LARGE SCALE GENOMIC DNA]</scope>
    <source>
        <strain>ATCC 49558 / DSM 4304 / JCM 9628 / NBRC 100126 / VC-16</strain>
    </source>
</reference>
<reference evidence="5" key="2">
    <citation type="journal article" date="2001" name="Mol. Biol. Evol.">
        <title>Phylogenetic analyses of two 'archaeal' genes in thermotoga maritima reveal multiple transfers between archaea and bacteria.</title>
        <authorList>
            <person name="Nesbo C.L."/>
            <person name="L'Haridon S."/>
            <person name="Stetter K.O."/>
            <person name="Doolittle W.F."/>
        </authorList>
    </citation>
    <scope>PARTIAL NUCLEOTIDE SEQUENCE [GENOMIC DNA]</scope>
    <scope>PHYLOGENETIC STUDY</scope>
</reference>